<evidence type="ECO:0000269" key="1">
    <source>
    </source>
</evidence>
<evidence type="ECO:0000303" key="2">
    <source>
    </source>
</evidence>
<evidence type="ECO:0000305" key="3"/>
<evidence type="ECO:0000305" key="4">
    <source>
    </source>
</evidence>
<evidence type="ECO:0007744" key="5">
    <source>
        <dbReference type="PDB" id="2Y7D"/>
    </source>
</evidence>
<evidence type="ECO:0007744" key="6">
    <source>
        <dbReference type="PDB" id="2Y7E"/>
    </source>
</evidence>
<evidence type="ECO:0007744" key="7">
    <source>
        <dbReference type="PDB" id="2Y7F"/>
    </source>
</evidence>
<evidence type="ECO:0007744" key="8">
    <source>
        <dbReference type="PDB" id="2Y7G"/>
    </source>
</evidence>
<evidence type="ECO:0007829" key="9">
    <source>
        <dbReference type="PDB" id="2Y7E"/>
    </source>
</evidence>
<gene>
    <name evidence="2" type="primary">kce</name>
    <name type="ordered locus">CLOAM0912</name>
</gene>
<dbReference type="EC" id="2.3.1.247" evidence="1"/>
<dbReference type="EMBL" id="CU466930">
    <property type="protein sequence ID" value="CAO80785.1"/>
    <property type="molecule type" value="Genomic_DNA"/>
</dbReference>
<dbReference type="RefSeq" id="WP_015424643.1">
    <property type="nucleotide sequence ID" value="NC_020449.1"/>
</dbReference>
<dbReference type="PDB" id="2Y7D">
    <property type="method" value="X-ray"/>
    <property type="resolution" value="1.59 A"/>
    <property type="chains" value="A/B/C/D=2-276"/>
</dbReference>
<dbReference type="PDB" id="2Y7E">
    <property type="method" value="X-ray"/>
    <property type="resolution" value="1.28 A"/>
    <property type="chains" value="A/B=2-276"/>
</dbReference>
<dbReference type="PDB" id="2Y7F">
    <property type="method" value="X-ray"/>
    <property type="resolution" value="1.75 A"/>
    <property type="chains" value="A/B/C/D=2-276"/>
</dbReference>
<dbReference type="PDB" id="2Y7G">
    <property type="method" value="X-ray"/>
    <property type="resolution" value="1.40 A"/>
    <property type="chains" value="A/B=2-276"/>
</dbReference>
<dbReference type="PDBsum" id="2Y7D"/>
<dbReference type="PDBsum" id="2Y7E"/>
<dbReference type="PDBsum" id="2Y7F"/>
<dbReference type="PDBsum" id="2Y7G"/>
<dbReference type="SMR" id="B0VHH0"/>
<dbReference type="STRING" id="459349.CLOAM0912"/>
<dbReference type="KEGG" id="caci:CLOAM0912"/>
<dbReference type="eggNOG" id="COG3246">
    <property type="taxonomic scope" value="Bacteria"/>
</dbReference>
<dbReference type="HOGENOM" id="CLU_065536_2_0_0"/>
<dbReference type="OrthoDB" id="9801076at2"/>
<dbReference type="BRENDA" id="2.3.1.247">
    <property type="organism ID" value="14207"/>
</dbReference>
<dbReference type="UniPathway" id="UPA00870"/>
<dbReference type="EvolutionaryTrace" id="B0VHH0"/>
<dbReference type="Proteomes" id="UP000002019">
    <property type="component" value="Chromosome"/>
</dbReference>
<dbReference type="GO" id="GO:0043720">
    <property type="term" value="F:3-keto-5-aminohexanoate cleavage activity"/>
    <property type="evidence" value="ECO:0007669"/>
    <property type="project" value="InterPro"/>
</dbReference>
<dbReference type="GO" id="GO:0046872">
    <property type="term" value="F:metal ion binding"/>
    <property type="evidence" value="ECO:0007669"/>
    <property type="project" value="UniProtKB-KW"/>
</dbReference>
<dbReference type="GO" id="GO:0019475">
    <property type="term" value="P:L-lysine catabolic process to acetate"/>
    <property type="evidence" value="ECO:0007669"/>
    <property type="project" value="UniProtKB-UniPathway"/>
</dbReference>
<dbReference type="Gene3D" id="3.20.20.70">
    <property type="entry name" value="Aldolase class I"/>
    <property type="match status" value="1"/>
</dbReference>
<dbReference type="InterPro" id="IPR013785">
    <property type="entry name" value="Aldolase_TIM"/>
</dbReference>
<dbReference type="InterPro" id="IPR008567">
    <property type="entry name" value="BKACE"/>
</dbReference>
<dbReference type="PANTHER" id="PTHR37418:SF2">
    <property type="entry name" value="3-KETO-5-AMINOHEXANOATE CLEAVAGE ENZYME"/>
    <property type="match status" value="1"/>
</dbReference>
<dbReference type="PANTHER" id="PTHR37418">
    <property type="entry name" value="3-KETO-5-AMINOHEXANOATE CLEAVAGE ENZYME-RELATED"/>
    <property type="match status" value="1"/>
</dbReference>
<dbReference type="Pfam" id="PF05853">
    <property type="entry name" value="BKACE"/>
    <property type="match status" value="1"/>
</dbReference>
<dbReference type="SUPFAM" id="SSF102114">
    <property type="entry name" value="Radical SAM enzymes"/>
    <property type="match status" value="1"/>
</dbReference>
<comment type="function">
    <text evidence="1">Involved in the anaerobic fermentation of lysine. Catalyzes the reversible reaction between 3-keto-5-aminohexanoate (KAH) and acetyl-CoA to form 3-aminobutyryl-CoA and acetoacetate. The reaction involves the deprotonation of KAH, the nucleophilic addition onto acetyl-CoA and the intramolecular transfer of the CoA moiety.</text>
</comment>
<comment type="catalytic activity">
    <reaction evidence="1">
        <text>(5S)-5-amino-3-oxohexanoate + acetyl-CoA = (3S)-3-aminobutanoyl-CoA + acetoacetate</text>
        <dbReference type="Rhea" id="RHEA:31555"/>
        <dbReference type="ChEBI" id="CHEBI:13705"/>
        <dbReference type="ChEBI" id="CHEBI:57288"/>
        <dbReference type="ChEBI" id="CHEBI:57366"/>
        <dbReference type="ChEBI" id="CHEBI:58523"/>
        <dbReference type="EC" id="2.3.1.247"/>
    </reaction>
</comment>
<comment type="cofactor">
    <cofactor evidence="1">
        <name>Zn(2+)</name>
        <dbReference type="ChEBI" id="CHEBI:29105"/>
    </cofactor>
</comment>
<comment type="biophysicochemical properties">
    <kinetics>
        <KM evidence="1">0.208 mM for KAH</KM>
        <KM evidence="1">0.012 mM for acetoacetate</KM>
        <text evidence="1">kcat is 2.69 sec(-1) for 3-keto-5-aminohexanoate cleavage.</text>
    </kinetics>
</comment>
<comment type="pathway">
    <text evidence="4">Amino-acid degradation; L-lysine degradation via acetate pathway.</text>
</comment>
<comment type="subunit">
    <text evidence="1">Homotetramer.</text>
</comment>
<comment type="similarity">
    <text evidence="3">Belongs to the BKACE family. Kce subfamily.</text>
</comment>
<feature type="chain" id="PRO_0000416975" description="3-keto-5-aminohexanoate cleavage enzyme">
    <location>
        <begin position="1"/>
        <end position="276"/>
    </location>
</feature>
<feature type="binding site" evidence="1 7">
    <location>
        <position position="14"/>
    </location>
    <ligand>
        <name>(5S)-5-amino-3-oxohexanoate</name>
        <dbReference type="ChEBI" id="CHEBI:58523"/>
    </ligand>
</feature>
<feature type="binding site" evidence="1 5 6 7 8">
    <location>
        <position position="46"/>
    </location>
    <ligand>
        <name>Zn(2+)</name>
        <dbReference type="ChEBI" id="CHEBI:29105"/>
    </ligand>
</feature>
<feature type="binding site" evidence="1 5 6 7 8">
    <location>
        <position position="48"/>
    </location>
    <ligand>
        <name>Zn(2+)</name>
        <dbReference type="ChEBI" id="CHEBI:29105"/>
    </ligand>
</feature>
<feature type="binding site" evidence="1 7">
    <location>
        <position position="82"/>
    </location>
    <ligand>
        <name>(5S)-5-amino-3-oxohexanoate</name>
        <dbReference type="ChEBI" id="CHEBI:58523"/>
    </ligand>
</feature>
<feature type="binding site" evidence="1 7">
    <location>
        <position position="85"/>
    </location>
    <ligand>
        <name>(5S)-5-amino-3-oxohexanoate</name>
        <dbReference type="ChEBI" id="CHEBI:58523"/>
    </ligand>
</feature>
<feature type="binding site" evidence="1 7">
    <location>
        <position position="106"/>
    </location>
    <ligand>
        <name>(5S)-5-amino-3-oxohexanoate</name>
        <dbReference type="ChEBI" id="CHEBI:58523"/>
    </ligand>
</feature>
<feature type="binding site" evidence="1 7">
    <location>
        <position position="108"/>
    </location>
    <ligand>
        <name>(5S)-5-amino-3-oxohexanoate</name>
        <dbReference type="ChEBI" id="CHEBI:58523"/>
    </ligand>
</feature>
<feature type="binding site" evidence="1 5 6 7 8">
    <location>
        <position position="230"/>
    </location>
    <ligand>
        <name>Zn(2+)</name>
        <dbReference type="ChEBI" id="CHEBI:29105"/>
    </ligand>
</feature>
<feature type="mutagenesis site" description="Reduced catalytic efficiency." evidence="1">
    <original>S</original>
    <variation>G</variation>
    <location>
        <position position="82"/>
    </location>
</feature>
<feature type="mutagenesis site" description="Reduced catalytic efficiency." evidence="1">
    <original>E</original>
    <variation>G</variation>
    <variation>Q</variation>
    <location>
        <position position="143"/>
    </location>
</feature>
<feature type="mutagenesis site" description="Loss of catalytic activity." evidence="1">
    <original>R</original>
    <variation>G</variation>
    <location>
        <position position="226"/>
    </location>
</feature>
<feature type="mutagenesis site" description="Loss of catalytic activity." evidence="1">
    <original>D</original>
    <variation>G</variation>
    <location>
        <position position="231"/>
    </location>
</feature>
<feature type="strand" evidence="9">
    <location>
        <begin position="6"/>
        <end position="9"/>
    </location>
</feature>
<feature type="turn" evidence="9">
    <location>
        <begin position="17"/>
        <end position="19"/>
    </location>
</feature>
<feature type="helix" evidence="9">
    <location>
        <begin position="27"/>
        <end position="40"/>
    </location>
</feature>
<feature type="strand" evidence="9">
    <location>
        <begin position="42"/>
        <end position="47"/>
    </location>
</feature>
<feature type="helix" evidence="9">
    <location>
        <begin position="60"/>
        <end position="73"/>
    </location>
</feature>
<feature type="strand" evidence="9">
    <location>
        <begin position="77"/>
        <end position="81"/>
    </location>
</feature>
<feature type="helix" evidence="9">
    <location>
        <begin position="91"/>
        <end position="95"/>
    </location>
</feature>
<feature type="helix" evidence="9">
    <location>
        <begin position="96"/>
        <end position="100"/>
    </location>
</feature>
<feature type="strand" evidence="9">
    <location>
        <begin position="103"/>
        <end position="108"/>
    </location>
</feature>
<feature type="strand" evidence="9">
    <location>
        <begin position="112"/>
        <end position="114"/>
    </location>
</feature>
<feature type="strand" evidence="9">
    <location>
        <begin position="117"/>
        <end position="119"/>
    </location>
</feature>
<feature type="helix" evidence="9">
    <location>
        <begin position="123"/>
        <end position="135"/>
    </location>
</feature>
<feature type="strand" evidence="9">
    <location>
        <begin position="139"/>
        <end position="144"/>
    </location>
</feature>
<feature type="helix" evidence="9">
    <location>
        <begin position="147"/>
        <end position="158"/>
    </location>
</feature>
<feature type="strand" evidence="9">
    <location>
        <begin position="168"/>
        <end position="173"/>
    </location>
</feature>
<feature type="helix" evidence="9">
    <location>
        <begin position="183"/>
        <end position="196"/>
    </location>
</feature>
<feature type="strand" evidence="9">
    <location>
        <begin position="201"/>
        <end position="206"/>
    </location>
</feature>
<feature type="helix" evidence="9">
    <location>
        <begin position="208"/>
        <end position="210"/>
    </location>
</feature>
<feature type="helix" evidence="9">
    <location>
        <begin position="211"/>
        <end position="219"/>
    </location>
</feature>
<feature type="turn" evidence="9">
    <location>
        <begin position="220"/>
        <end position="222"/>
    </location>
</feature>
<feature type="strand" evidence="9">
    <location>
        <begin position="224"/>
        <end position="228"/>
    </location>
</feature>
<feature type="turn" evidence="9">
    <location>
        <begin position="229"/>
        <end position="231"/>
    </location>
</feature>
<feature type="strand" evidence="9">
    <location>
        <begin position="234"/>
        <end position="236"/>
    </location>
</feature>
<feature type="helix" evidence="9">
    <location>
        <begin position="244"/>
        <end position="258"/>
    </location>
</feature>
<feature type="helix" evidence="9">
    <location>
        <begin position="265"/>
        <end position="271"/>
    </location>
</feature>
<reference key="1">
    <citation type="journal article" date="2008" name="J. Bacteriol.">
        <title>'Candidatus Cloacamonas acidaminovorans': genome sequence reconstruction provides a first glimpse of a new bacterial division.</title>
        <authorList>
            <person name="Pelletier E."/>
            <person name="Kreimeyer A."/>
            <person name="Bocs S."/>
            <person name="Rouy Z."/>
            <person name="Gyapay G."/>
            <person name="Chouari R."/>
            <person name="Riviere D."/>
            <person name="Ganesan A."/>
            <person name="Daegelen P."/>
            <person name="Sghir A."/>
            <person name="Cohen G.N."/>
            <person name="Medigue C."/>
            <person name="Weissenbach J."/>
            <person name="Le Paslier D."/>
        </authorList>
    </citation>
    <scope>NUCLEOTIDE SEQUENCE [LARGE SCALE GENOMIC DNA]</scope>
    <source>
        <strain>Evry</strain>
    </source>
</reference>
<reference evidence="5 6 7 8" key="2">
    <citation type="journal article" date="2011" name="J. Biol. Chem.">
        <title>3-Keto-5-aminohexanoate cleavage enzyme: a common fold for an uncommon Claisen-type condensation.</title>
        <authorList>
            <person name="Bellinzoni M."/>
            <person name="Bastard K."/>
            <person name="Perret A."/>
            <person name="Zaparucha A."/>
            <person name="Perchat N."/>
            <person name="Vergne C."/>
            <person name="Wagner T."/>
            <person name="de Melo-Minardi R.C."/>
            <person name="Artiguenave F."/>
            <person name="Cohen G.N."/>
            <person name="Weissenbach J."/>
            <person name="Salanoubat M."/>
            <person name="Alzari P.M."/>
        </authorList>
    </citation>
    <scope>X-RAY CRYSTALLOGRAPHY (1.28 ANGSTROMS) OF 2-276 IN COMPLEXES WITH 5-AMINO-3-OXO-HEXANOATE; ACETOACETATE AND MG(2+)</scope>
    <scope>FUNCTION</scope>
    <scope>CATALYTIC ACTIVITY</scope>
    <scope>BIOPHYSICOCHEMICAL PROPERTIES</scope>
    <scope>PATHWAY</scope>
    <scope>MUTAGENESIS OF SER-82; GLU-143; ARG-226 AND ASP-231</scope>
    <scope>REACTION MECHANISM</scope>
    <scope>SUBUNIT</scope>
</reference>
<sequence>MEPLILTAAITGAETTRADQPNLPITPEEQAKEAKACFEAGARVIHLHIREDDGRPSQRLDRFQEAISAIREVVPEIIIQISTGGAVGESFDKRLAPLALKPEMATLNAGTLNFGDDIFINHPADIIRLAEAFKQYNVVPEVEVYESGMVDAVARLIKKGIITQNPLHIQFVLGVPGGMSGKPKNLMYMMEHLKEEIPTATWAVAGIGRWHIPTSLIAMVTGGHIRCGFEDNIFYHKGVIAESNAQLVARLARIAKEIGRPLATPEQAREILALNK</sequence>
<keyword id="KW-0002">3D-structure</keyword>
<keyword id="KW-0479">Metal-binding</keyword>
<keyword id="KW-0808">Transferase</keyword>
<keyword id="KW-0862">Zinc</keyword>
<accession>B0VHH0</accession>
<protein>
    <recommendedName>
        <fullName evidence="2">3-keto-5-aminohexanoate cleavage enzyme</fullName>
        <ecNumber evidence="1">2.3.1.247</ecNumber>
    </recommendedName>
</protein>
<proteinExistence type="evidence at protein level"/>
<name>KCE_CLOAI</name>
<organism>
    <name type="scientific">Cloacimonas acidaminovorans (strain Evry)</name>
    <dbReference type="NCBI Taxonomy" id="459349"/>
    <lineage>
        <taxon>Bacteria</taxon>
        <taxon>Pseudomonadati</taxon>
        <taxon>Candidatus Cloacimonadota</taxon>
        <taxon>Candidatus Cloacimonadia</taxon>
        <taxon>Candidatus Cloacimonadales</taxon>
        <taxon>Candidatus Cloacimonadaceae</taxon>
        <taxon>Candidatus Cloacimonas</taxon>
    </lineage>
</organism>